<accession>Q3MNT0</accession>
<accession>A0A1D8PRK1</accession>
<accession>Q5A0G3</accession>
<proteinExistence type="inferred from homology"/>
<gene>
    <name type="primary">SPT6</name>
    <name type="ordered locus">CAALFM_C704300WA</name>
    <name type="ORF">CaJ7.0509</name>
    <name type="ORF">CaO19.7136</name>
</gene>
<keyword id="KW-0158">Chromosome</keyword>
<keyword id="KW-0539">Nucleus</keyword>
<keyword id="KW-1185">Reference proteome</keyword>
<keyword id="KW-0727">SH2 domain</keyword>
<keyword id="KW-0804">Transcription</keyword>
<feature type="chain" id="PRO_0000238571" description="Transcription elongation factor SPT6">
    <location>
        <begin position="1"/>
        <end position="1401"/>
    </location>
</feature>
<feature type="domain" description="SH2" evidence="2">
    <location>
        <begin position="1209"/>
        <end position="1303"/>
    </location>
</feature>
<feature type="region of interest" description="Disordered" evidence="3">
    <location>
        <begin position="1"/>
        <end position="209"/>
    </location>
</feature>
<feature type="compositionally biased region" description="Basic residues" evidence="3">
    <location>
        <begin position="1"/>
        <end position="12"/>
    </location>
</feature>
<feature type="compositionally biased region" description="Acidic residues" evidence="3">
    <location>
        <begin position="47"/>
        <end position="57"/>
    </location>
</feature>
<feature type="compositionally biased region" description="Basic residues" evidence="3">
    <location>
        <begin position="77"/>
        <end position="87"/>
    </location>
</feature>
<feature type="compositionally biased region" description="Low complexity" evidence="3">
    <location>
        <begin position="105"/>
        <end position="119"/>
    </location>
</feature>
<feature type="compositionally biased region" description="Basic and acidic residues" evidence="3">
    <location>
        <begin position="138"/>
        <end position="151"/>
    </location>
</feature>
<feature type="compositionally biased region" description="Acidic residues" evidence="3">
    <location>
        <begin position="168"/>
        <end position="183"/>
    </location>
</feature>
<protein>
    <recommendedName>
        <fullName>Transcription elongation factor SPT6</fullName>
    </recommendedName>
    <alternativeName>
        <fullName>Chromatin elongation factor SPT6</fullName>
    </alternativeName>
</protein>
<sequence length="1401" mass="162067">MMKKKISAKKKNQQQQQLHQPTMSEVTEEERTRYEEEEDVRDSPSDSSEESEDDEEEIQKVREGFIVDDEEDEVQTKKRKSHKRKRDKERPHYDDALDDDDLELLLENSGLKRGSSSSGKFKRLKRKQIEDDEDEIESQDHQGEQQLRDIFSDDEEVEEEAAPRIMDEFDGFIEEDDFSDEDEQTRLERREQRKKKKQGPRIDTSNLSNVDRQSLSELFEVFGDGNEYDWALEAQELEDAGAIDKEEPASLDEVFEHSELKERMLTEEDNLIRIIDVPERYQMYRSALTYIDLDDEELELEKTWVANTLLKEKKAFLRDDWVEPFKQCVGQVVQFVSKENLEVPFIWNHRRDYLEYVDPDAPIPGSVRELMISEDDVWRIVKLDIEYHSLYEKRLNTEKIIDSLEIDDELVKDIKTLDSMVAIQDMHDYIQFTYSKEIRQREETQNRKHSKFALYERIRENVLYDAVKAYGITAKEFGENVQDQSSKGFEVPYRIHATDDPWESPDDMIERLIQDDEVIFRDEKTARDAVRRTFADEIFYNPKIRHEVRSTYKLYASISVAVTEKGRASIDAHSPFADIKYAINRSPADLIAKPDVLLRMLEAERLGLVVIKVETKDFANWFDCLFNCLKSDGFSDISEKWNQERQAVLRTAISRLCAVVALNTKEDLRRECERLIASKVRHGLLAKIEQAPFTPYGFDIGSKANVLALTFGKGDYDSAVVGVYIKHDGKVSRFFKSTENPSRNRETEDAFKGQLKQFFDEDETPDVVVVSGYNANTKRLHDVVYNFVSEYGISVKSEFDDGSSQLVKVIWGQDETARLYQNSERAKKEFPDKPTLVKYAISLGRYLQDPLLEYITLGDDILSLTFHEHQKLISNDLVKEVVESAFVDLVNAVGVDINESVRDSRLAQTLKYVGGLGPRKASGMLRNIAQKLGSVLTTRSQLIEYELTTRTIFINCSAALKISLNKSINVKDFEIEILDTTRIHPEDYQLAMKMAADALDMDEESELHEKGGVIKELLENDPSKLNLLNLNDFANQIYKLTHKLKFRSLQAIRLELIQGFAEIRSPFRILTNEDAFFILTGEKPQMLKNTVIPATITKVTKNHHDPYARIRGLKVVTPSLIQGTIDENAIPRDAEYVQGQVVQAVVLELYTDTFAAVLSLRREDISRAMKGGVVREYGKWDYKAEDEDIKREKAKENAKLAKTRNIQHPFYRNFNYKQAEEYLAPQNVGDYVIRPSSKGASYLTITWKVGNNLFQHLLVEERSRGRFKEYIVDGKTYEDLDQLAFQHIQVIAKNVTDMVRHPKFREGTLSVVHEWLESYTRANPKSSAYVFCYDHKSPGNFLLLFKVNVSAKVVTWHVKTEVGGYELRSSVYPNMLSLCNGFKQAVKMSSQQTKSYNTGYY</sequence>
<organism>
    <name type="scientific">Candida albicans (strain SC5314 / ATCC MYA-2876)</name>
    <name type="common">Yeast</name>
    <dbReference type="NCBI Taxonomy" id="237561"/>
    <lineage>
        <taxon>Eukaryota</taxon>
        <taxon>Fungi</taxon>
        <taxon>Dikarya</taxon>
        <taxon>Ascomycota</taxon>
        <taxon>Saccharomycotina</taxon>
        <taxon>Pichiomycetes</taxon>
        <taxon>Debaryomycetaceae</taxon>
        <taxon>Candida/Lodderomyces clade</taxon>
        <taxon>Candida</taxon>
    </lineage>
</organism>
<evidence type="ECO:0000250" key="1">
    <source>
        <dbReference type="UniProtKB" id="P23615"/>
    </source>
</evidence>
<evidence type="ECO:0000255" key="2">
    <source>
        <dbReference type="PROSITE-ProRule" id="PRU00191"/>
    </source>
</evidence>
<evidence type="ECO:0000256" key="3">
    <source>
        <dbReference type="SAM" id="MobiDB-lite"/>
    </source>
</evidence>
<evidence type="ECO:0000305" key="4"/>
<comment type="function">
    <text evidence="1">Histone H3-H4 chaperone that plays a role in maintenance of chromatin structure during RNA polymerase II transcription elongation thereby repressing transcription initiation from cryptic promoters. Mediates the reassembly of nucleosomes onto the promoters of at least a selected set of genes during repression; the nucleosome reassembly is essential for transcriptional repression. Essential for viability.</text>
</comment>
<comment type="subcellular location">
    <subcellularLocation>
        <location evidence="1">Nucleus</location>
    </subcellularLocation>
    <subcellularLocation>
        <location evidence="1">Chromosome</location>
    </subcellularLocation>
</comment>
<comment type="similarity">
    <text evidence="4">Belongs to the SPT6 family.</text>
</comment>
<dbReference type="EMBL" id="AP006852">
    <property type="protein sequence ID" value="BAE44930.1"/>
    <property type="molecule type" value="Genomic_DNA"/>
</dbReference>
<dbReference type="EMBL" id="CP017629">
    <property type="protein sequence ID" value="AOW30767.1"/>
    <property type="molecule type" value="Genomic_DNA"/>
</dbReference>
<dbReference type="RefSeq" id="XP_715187.1">
    <property type="nucleotide sequence ID" value="XM_710094.1"/>
</dbReference>
<dbReference type="SMR" id="Q3MNT0"/>
<dbReference type="BioGRID" id="1226265">
    <property type="interactions" value="1"/>
</dbReference>
<dbReference type="FunCoup" id="Q3MNT0">
    <property type="interactions" value="1269"/>
</dbReference>
<dbReference type="STRING" id="237561.Q3MNT0"/>
<dbReference type="EnsemblFungi" id="C7_04300W_A-T">
    <property type="protein sequence ID" value="C7_04300W_A-T-p1"/>
    <property type="gene ID" value="C7_04300W_A"/>
</dbReference>
<dbReference type="GeneID" id="3643171"/>
<dbReference type="KEGG" id="cal:CAALFM_C704300WA"/>
<dbReference type="CGD" id="CAL0000194756">
    <property type="gene designation" value="SPT6"/>
</dbReference>
<dbReference type="VEuPathDB" id="FungiDB:C7_04300W_A"/>
<dbReference type="eggNOG" id="KOG1856">
    <property type="taxonomic scope" value="Eukaryota"/>
</dbReference>
<dbReference type="HOGENOM" id="CLU_001680_0_1_1"/>
<dbReference type="InParanoid" id="Q3MNT0"/>
<dbReference type="OMA" id="GYFYLCF"/>
<dbReference type="OrthoDB" id="995477at2759"/>
<dbReference type="Proteomes" id="UP000000559">
    <property type="component" value="Chromosome 7"/>
</dbReference>
<dbReference type="GO" id="GO:0000791">
    <property type="term" value="C:euchromatin"/>
    <property type="evidence" value="ECO:0007669"/>
    <property type="project" value="EnsemblFungi"/>
</dbReference>
<dbReference type="GO" id="GO:0005721">
    <property type="term" value="C:pericentric heterochromatin"/>
    <property type="evidence" value="ECO:0007669"/>
    <property type="project" value="EnsemblFungi"/>
</dbReference>
<dbReference type="GO" id="GO:0008023">
    <property type="term" value="C:transcription elongation factor complex"/>
    <property type="evidence" value="ECO:0000318"/>
    <property type="project" value="GO_Central"/>
</dbReference>
<dbReference type="GO" id="GO:0003677">
    <property type="term" value="F:DNA binding"/>
    <property type="evidence" value="ECO:0007669"/>
    <property type="project" value="InterPro"/>
</dbReference>
<dbReference type="GO" id="GO:0042393">
    <property type="term" value="F:histone binding"/>
    <property type="evidence" value="ECO:0000318"/>
    <property type="project" value="GO_Central"/>
</dbReference>
<dbReference type="GO" id="GO:0031491">
    <property type="term" value="F:nucleosome binding"/>
    <property type="evidence" value="ECO:0000318"/>
    <property type="project" value="GO_Central"/>
</dbReference>
<dbReference type="GO" id="GO:0001073">
    <property type="term" value="F:transcription antitermination factor activity, DNA binding"/>
    <property type="evidence" value="ECO:0007669"/>
    <property type="project" value="EnsemblFungi"/>
</dbReference>
<dbReference type="GO" id="GO:0009267">
    <property type="term" value="P:cellular response to starvation"/>
    <property type="evidence" value="ECO:0000315"/>
    <property type="project" value="CGD"/>
</dbReference>
<dbReference type="GO" id="GO:0030447">
    <property type="term" value="P:filamentous growth"/>
    <property type="evidence" value="ECO:0000315"/>
    <property type="project" value="CGD"/>
</dbReference>
<dbReference type="GO" id="GO:0036180">
    <property type="term" value="P:filamentous growth of a population of unicellular organisms in response to biotic stimulus"/>
    <property type="evidence" value="ECO:0000315"/>
    <property type="project" value="CGD"/>
</dbReference>
<dbReference type="GO" id="GO:0036170">
    <property type="term" value="P:filamentous growth of a population of unicellular organisms in response to starvation"/>
    <property type="evidence" value="ECO:0000315"/>
    <property type="project" value="CGD"/>
</dbReference>
<dbReference type="GO" id="GO:0000082">
    <property type="term" value="P:G1/S transition of mitotic cell cycle"/>
    <property type="evidence" value="ECO:0007669"/>
    <property type="project" value="EnsemblFungi"/>
</dbReference>
<dbReference type="GO" id="GO:0000122">
    <property type="term" value="P:negative regulation of transcription by RNA polymerase II"/>
    <property type="evidence" value="ECO:0007669"/>
    <property type="project" value="EnsemblFungi"/>
</dbReference>
<dbReference type="GO" id="GO:0006334">
    <property type="term" value="P:nucleosome assembly"/>
    <property type="evidence" value="ECO:0007669"/>
    <property type="project" value="EnsemblFungi"/>
</dbReference>
<dbReference type="GO" id="GO:0034728">
    <property type="term" value="P:nucleosome organization"/>
    <property type="evidence" value="ECO:0000318"/>
    <property type="project" value="GO_Central"/>
</dbReference>
<dbReference type="GO" id="GO:0016973">
    <property type="term" value="P:poly(A)+ mRNA export from nucleus"/>
    <property type="evidence" value="ECO:0007669"/>
    <property type="project" value="EnsemblFungi"/>
</dbReference>
<dbReference type="GO" id="GO:1900445">
    <property type="term" value="P:positive regulation of filamentous growth of a population of unicellular organisms in response to biotic stimulus"/>
    <property type="evidence" value="ECO:0000315"/>
    <property type="project" value="CGD"/>
</dbReference>
<dbReference type="GO" id="GO:1900436">
    <property type="term" value="P:positive regulation of filamentous growth of a population of unicellular organisms in response to starvation"/>
    <property type="evidence" value="ECO:0000315"/>
    <property type="project" value="CGD"/>
</dbReference>
<dbReference type="GO" id="GO:0032968">
    <property type="term" value="P:positive regulation of transcription elongation by RNA polymerase II"/>
    <property type="evidence" value="ECO:0007669"/>
    <property type="project" value="EnsemblFungi"/>
</dbReference>
<dbReference type="GO" id="GO:0031440">
    <property type="term" value="P:regulation of mRNA 3'-end processing"/>
    <property type="evidence" value="ECO:0007669"/>
    <property type="project" value="EnsemblFungi"/>
</dbReference>
<dbReference type="GO" id="GO:0006368">
    <property type="term" value="P:transcription elongation by RNA polymerase II"/>
    <property type="evidence" value="ECO:0000316"/>
    <property type="project" value="CGD"/>
</dbReference>
<dbReference type="GO" id="GO:0140673">
    <property type="term" value="P:transcription elongation-coupled chromatin remodeling"/>
    <property type="evidence" value="ECO:0007669"/>
    <property type="project" value="EnsemblFungi"/>
</dbReference>
<dbReference type="CDD" id="cd09928">
    <property type="entry name" value="SH2_Cterm_SPT6_like"/>
    <property type="match status" value="1"/>
</dbReference>
<dbReference type="CDD" id="cd09918">
    <property type="entry name" value="SH2_Nterm_SPT6_like"/>
    <property type="match status" value="1"/>
</dbReference>
<dbReference type="FunFam" id="3.30.505.10:FF:000065">
    <property type="entry name" value="Transcription elongation factor SPT6"/>
    <property type="match status" value="1"/>
</dbReference>
<dbReference type="FunFam" id="1.10.10.2740:FF:000002">
    <property type="entry name" value="Transcription elongation factor Spt6"/>
    <property type="match status" value="1"/>
</dbReference>
<dbReference type="Gene3D" id="1.10.10.650">
    <property type="entry name" value="RuvA domain 2-like"/>
    <property type="match status" value="1"/>
</dbReference>
<dbReference type="Gene3D" id="3.30.505.10">
    <property type="entry name" value="SH2 domain"/>
    <property type="match status" value="2"/>
</dbReference>
<dbReference type="Gene3D" id="1.10.10.2740">
    <property type="entry name" value="Spt6, Death-like domain"/>
    <property type="match status" value="1"/>
</dbReference>
<dbReference type="Gene3D" id="1.10.150.850">
    <property type="entry name" value="Spt6, helix-hairpin-helix domain"/>
    <property type="match status" value="1"/>
</dbReference>
<dbReference type="Gene3D" id="1.10.3500.10">
    <property type="entry name" value="Tex N-terminal region-like"/>
    <property type="match status" value="1"/>
</dbReference>
<dbReference type="Gene3D" id="3.30.420.140">
    <property type="entry name" value="YqgF/RNase H-like domain"/>
    <property type="match status" value="1"/>
</dbReference>
<dbReference type="InterPro" id="IPR012337">
    <property type="entry name" value="RNaseH-like_sf"/>
</dbReference>
<dbReference type="InterPro" id="IPR010994">
    <property type="entry name" value="RuvA_2-like"/>
</dbReference>
<dbReference type="InterPro" id="IPR000980">
    <property type="entry name" value="SH2"/>
</dbReference>
<dbReference type="InterPro" id="IPR036860">
    <property type="entry name" value="SH2_dom_sf"/>
</dbReference>
<dbReference type="InterPro" id="IPR028083">
    <property type="entry name" value="Spt6_acidic_N_dom"/>
</dbReference>
<dbReference type="InterPro" id="IPR042066">
    <property type="entry name" value="Spt6_death-like"/>
</dbReference>
<dbReference type="InterPro" id="IPR032706">
    <property type="entry name" value="Spt6_HHH"/>
</dbReference>
<dbReference type="InterPro" id="IPR028088">
    <property type="entry name" value="Spt6_HTH_DNA-bd_dom"/>
</dbReference>
<dbReference type="InterPro" id="IPR035420">
    <property type="entry name" value="Spt6_SH2"/>
</dbReference>
<dbReference type="InterPro" id="IPR035018">
    <property type="entry name" value="Spt6_SH2_C"/>
</dbReference>
<dbReference type="InterPro" id="IPR035019">
    <property type="entry name" value="Spt6_SH2_N"/>
</dbReference>
<dbReference type="InterPro" id="IPR028231">
    <property type="entry name" value="Spt6_YqgF"/>
</dbReference>
<dbReference type="InterPro" id="IPR055179">
    <property type="entry name" value="Tex-like_central_region"/>
</dbReference>
<dbReference type="InterPro" id="IPR023323">
    <property type="entry name" value="Tex-like_dom_sf"/>
</dbReference>
<dbReference type="InterPro" id="IPR023319">
    <property type="entry name" value="Tex-like_HTH_dom_sf"/>
</dbReference>
<dbReference type="InterPro" id="IPR017072">
    <property type="entry name" value="TF_Spt6"/>
</dbReference>
<dbReference type="InterPro" id="IPR037027">
    <property type="entry name" value="YqgF/RNaseH-like_dom_sf"/>
</dbReference>
<dbReference type="PANTHER" id="PTHR10145">
    <property type="entry name" value="TRANSCRIPTION ELONGATION FACTOR SPT6"/>
    <property type="match status" value="1"/>
</dbReference>
<dbReference type="PANTHER" id="PTHR10145:SF6">
    <property type="entry name" value="TRANSCRIPTION ELONGATION FACTOR SPT6"/>
    <property type="match status" value="1"/>
</dbReference>
<dbReference type="Pfam" id="PF14635">
    <property type="entry name" value="HHH_7"/>
    <property type="match status" value="1"/>
</dbReference>
<dbReference type="Pfam" id="PF14641">
    <property type="entry name" value="HTH_44"/>
    <property type="match status" value="1"/>
</dbReference>
<dbReference type="Pfam" id="PF14633">
    <property type="entry name" value="SH2_2"/>
    <property type="match status" value="1"/>
</dbReference>
<dbReference type="Pfam" id="PF14632">
    <property type="entry name" value="SPT6_acidic"/>
    <property type="match status" value="1"/>
</dbReference>
<dbReference type="Pfam" id="PF22706">
    <property type="entry name" value="Tex_central_region"/>
    <property type="match status" value="1"/>
</dbReference>
<dbReference type="Pfam" id="PF14639">
    <property type="entry name" value="YqgF"/>
    <property type="match status" value="1"/>
</dbReference>
<dbReference type="PIRSF" id="PIRSF036947">
    <property type="entry name" value="Spt6"/>
    <property type="match status" value="1"/>
</dbReference>
<dbReference type="SUPFAM" id="SSF53098">
    <property type="entry name" value="Ribonuclease H-like"/>
    <property type="match status" value="1"/>
</dbReference>
<dbReference type="SUPFAM" id="SSF47781">
    <property type="entry name" value="RuvA domain 2-like"/>
    <property type="match status" value="1"/>
</dbReference>
<dbReference type="SUPFAM" id="SSF55550">
    <property type="entry name" value="SH2 domain"/>
    <property type="match status" value="1"/>
</dbReference>
<dbReference type="SUPFAM" id="SSF158832">
    <property type="entry name" value="Tex N-terminal region-like"/>
    <property type="match status" value="1"/>
</dbReference>
<dbReference type="PROSITE" id="PS50001">
    <property type="entry name" value="SH2"/>
    <property type="match status" value="1"/>
</dbReference>
<name>SPT6_CANAL</name>
<reference key="1">
    <citation type="journal article" date="2005" name="Genetics">
        <title>Sequence finishing and gene mapping for Candida albicans chromosome 7 and syntenic analysis against the Saccharomyces cerevisiae genome.</title>
        <authorList>
            <person name="Chibana H."/>
            <person name="Oka N."/>
            <person name="Nakayama H."/>
            <person name="Aoyama T."/>
            <person name="Magee B.B."/>
            <person name="Magee P.T."/>
            <person name="Mikami Y."/>
        </authorList>
    </citation>
    <scope>NUCLEOTIDE SEQUENCE [LARGE SCALE GENOMIC DNA]</scope>
    <source>
        <strain>SC5314 / ATCC MYA-2876</strain>
    </source>
</reference>
<reference key="2">
    <citation type="journal article" date="2004" name="Proc. Natl. Acad. Sci. U.S.A.">
        <title>The diploid genome sequence of Candida albicans.</title>
        <authorList>
            <person name="Jones T."/>
            <person name="Federspiel N.A."/>
            <person name="Chibana H."/>
            <person name="Dungan J."/>
            <person name="Kalman S."/>
            <person name="Magee B.B."/>
            <person name="Newport G."/>
            <person name="Thorstenson Y.R."/>
            <person name="Agabian N."/>
            <person name="Magee P.T."/>
            <person name="Davis R.W."/>
            <person name="Scherer S."/>
        </authorList>
    </citation>
    <scope>NUCLEOTIDE SEQUENCE [LARGE SCALE GENOMIC DNA]</scope>
    <source>
        <strain>SC5314 / ATCC MYA-2876</strain>
    </source>
</reference>
<reference key="3">
    <citation type="journal article" date="2007" name="Genome Biol.">
        <title>Assembly of the Candida albicans genome into sixteen supercontigs aligned on the eight chromosomes.</title>
        <authorList>
            <person name="van het Hoog M."/>
            <person name="Rast T.J."/>
            <person name="Martchenko M."/>
            <person name="Grindle S."/>
            <person name="Dignard D."/>
            <person name="Hogues H."/>
            <person name="Cuomo C."/>
            <person name="Berriman M."/>
            <person name="Scherer S."/>
            <person name="Magee B.B."/>
            <person name="Whiteway M."/>
            <person name="Chibana H."/>
            <person name="Nantel A."/>
            <person name="Magee P.T."/>
        </authorList>
    </citation>
    <scope>GENOME REANNOTATION</scope>
    <source>
        <strain>SC5314 / ATCC MYA-2876</strain>
    </source>
</reference>
<reference key="4">
    <citation type="journal article" date="2013" name="Genome Biol.">
        <title>Assembly of a phased diploid Candida albicans genome facilitates allele-specific measurements and provides a simple model for repeat and indel structure.</title>
        <authorList>
            <person name="Muzzey D."/>
            <person name="Schwartz K."/>
            <person name="Weissman J.S."/>
            <person name="Sherlock G."/>
        </authorList>
    </citation>
    <scope>NUCLEOTIDE SEQUENCE [LARGE SCALE GENOMIC DNA]</scope>
    <scope>GENOME REANNOTATION</scope>
    <source>
        <strain>SC5314 / ATCC MYA-2876</strain>
    </source>
</reference>